<accession>A8EXK0</accession>
<keyword id="KW-0687">Ribonucleoprotein</keyword>
<keyword id="KW-0689">Ribosomal protein</keyword>
<keyword id="KW-0694">RNA-binding</keyword>
<keyword id="KW-0699">rRNA-binding</keyword>
<keyword id="KW-0820">tRNA-binding</keyword>
<evidence type="ECO:0000255" key="1">
    <source>
        <dbReference type="HAMAP-Rule" id="MF_00480"/>
    </source>
</evidence>
<evidence type="ECO:0000305" key="2"/>
<comment type="function">
    <text evidence="1">One of the primary rRNA binding proteins, it binds directly to 16S rRNA where it nucleates assembly of the head domain of the 30S subunit. Is located at the subunit interface close to the decoding center, probably blocks exit of the E-site tRNA.</text>
</comment>
<comment type="subunit">
    <text evidence="1">Part of the 30S ribosomal subunit. Contacts proteins S9 and S11.</text>
</comment>
<comment type="similarity">
    <text evidence="1">Belongs to the universal ribosomal protein uS7 family.</text>
</comment>
<sequence length="160" mass="18339">MSRRHAAGKRVILPDMKYNSILLSRFINNLMKEGKKALAEKIVYSAFNKIEKKHRVDPYQIFNNAMHNVKPHLEVTSVRVGGANYQVPTHVDESRGYALASRWIINAALKRSEKMMIDKLAEELFEASNNRGVAIKKKEDTHKMAEANKAFSHFSPKKMK</sequence>
<reference key="1">
    <citation type="submission" date="2007-09" db="EMBL/GenBank/DDBJ databases">
        <title>Complete genome sequence of Rickettsia canadensis.</title>
        <authorList>
            <person name="Madan A."/>
            <person name="Fahey J."/>
            <person name="Helton E."/>
            <person name="Ketteman M."/>
            <person name="Madan A."/>
            <person name="Rodrigues S."/>
            <person name="Sanchez A."/>
            <person name="Whiting M."/>
            <person name="Dasch G."/>
            <person name="Eremeeva M."/>
        </authorList>
    </citation>
    <scope>NUCLEOTIDE SEQUENCE [LARGE SCALE GENOMIC DNA]</scope>
    <source>
        <strain>McKiel</strain>
    </source>
</reference>
<name>RS7_RICCK</name>
<feature type="chain" id="PRO_1000014275" description="Small ribosomal subunit protein uS7">
    <location>
        <begin position="1"/>
        <end position="160"/>
    </location>
</feature>
<protein>
    <recommendedName>
        <fullName evidence="1">Small ribosomal subunit protein uS7</fullName>
    </recommendedName>
    <alternativeName>
        <fullName evidence="2">30S ribosomal protein S7</fullName>
    </alternativeName>
</protein>
<organism>
    <name type="scientific">Rickettsia canadensis (strain McKiel)</name>
    <dbReference type="NCBI Taxonomy" id="293613"/>
    <lineage>
        <taxon>Bacteria</taxon>
        <taxon>Pseudomonadati</taxon>
        <taxon>Pseudomonadota</taxon>
        <taxon>Alphaproteobacteria</taxon>
        <taxon>Rickettsiales</taxon>
        <taxon>Rickettsiaceae</taxon>
        <taxon>Rickettsieae</taxon>
        <taxon>Rickettsia</taxon>
        <taxon>belli group</taxon>
    </lineage>
</organism>
<proteinExistence type="inferred from homology"/>
<dbReference type="EMBL" id="CP000409">
    <property type="protein sequence ID" value="ABV73083.1"/>
    <property type="molecule type" value="Genomic_DNA"/>
</dbReference>
<dbReference type="RefSeq" id="WP_012148284.1">
    <property type="nucleotide sequence ID" value="NC_009879.1"/>
</dbReference>
<dbReference type="SMR" id="A8EXK0"/>
<dbReference type="STRING" id="293613.A1E_00675"/>
<dbReference type="KEGG" id="rcm:A1E_00675"/>
<dbReference type="eggNOG" id="COG0049">
    <property type="taxonomic scope" value="Bacteria"/>
</dbReference>
<dbReference type="HOGENOM" id="CLU_072226_1_1_5"/>
<dbReference type="Proteomes" id="UP000007056">
    <property type="component" value="Chromosome"/>
</dbReference>
<dbReference type="GO" id="GO:0015935">
    <property type="term" value="C:small ribosomal subunit"/>
    <property type="evidence" value="ECO:0007669"/>
    <property type="project" value="InterPro"/>
</dbReference>
<dbReference type="GO" id="GO:0019843">
    <property type="term" value="F:rRNA binding"/>
    <property type="evidence" value="ECO:0007669"/>
    <property type="project" value="UniProtKB-UniRule"/>
</dbReference>
<dbReference type="GO" id="GO:0003735">
    <property type="term" value="F:structural constituent of ribosome"/>
    <property type="evidence" value="ECO:0007669"/>
    <property type="project" value="InterPro"/>
</dbReference>
<dbReference type="GO" id="GO:0000049">
    <property type="term" value="F:tRNA binding"/>
    <property type="evidence" value="ECO:0007669"/>
    <property type="project" value="UniProtKB-UniRule"/>
</dbReference>
<dbReference type="GO" id="GO:0006412">
    <property type="term" value="P:translation"/>
    <property type="evidence" value="ECO:0007669"/>
    <property type="project" value="UniProtKB-UniRule"/>
</dbReference>
<dbReference type="CDD" id="cd14869">
    <property type="entry name" value="uS7_Bacteria"/>
    <property type="match status" value="1"/>
</dbReference>
<dbReference type="FunFam" id="1.10.455.10:FF:000001">
    <property type="entry name" value="30S ribosomal protein S7"/>
    <property type="match status" value="1"/>
</dbReference>
<dbReference type="Gene3D" id="1.10.455.10">
    <property type="entry name" value="Ribosomal protein S7 domain"/>
    <property type="match status" value="1"/>
</dbReference>
<dbReference type="HAMAP" id="MF_00480_B">
    <property type="entry name" value="Ribosomal_uS7_B"/>
    <property type="match status" value="1"/>
</dbReference>
<dbReference type="InterPro" id="IPR000235">
    <property type="entry name" value="Ribosomal_uS7"/>
</dbReference>
<dbReference type="InterPro" id="IPR005717">
    <property type="entry name" value="Ribosomal_uS7_bac/org-type"/>
</dbReference>
<dbReference type="InterPro" id="IPR020606">
    <property type="entry name" value="Ribosomal_uS7_CS"/>
</dbReference>
<dbReference type="InterPro" id="IPR023798">
    <property type="entry name" value="Ribosomal_uS7_dom"/>
</dbReference>
<dbReference type="InterPro" id="IPR036823">
    <property type="entry name" value="Ribosomal_uS7_dom_sf"/>
</dbReference>
<dbReference type="NCBIfam" id="TIGR01029">
    <property type="entry name" value="rpsG_bact"/>
    <property type="match status" value="1"/>
</dbReference>
<dbReference type="PANTHER" id="PTHR11205">
    <property type="entry name" value="RIBOSOMAL PROTEIN S7"/>
    <property type="match status" value="1"/>
</dbReference>
<dbReference type="Pfam" id="PF00177">
    <property type="entry name" value="Ribosomal_S7"/>
    <property type="match status" value="1"/>
</dbReference>
<dbReference type="PIRSF" id="PIRSF002122">
    <property type="entry name" value="RPS7p_RPS7a_RPS5e_RPS7o"/>
    <property type="match status" value="1"/>
</dbReference>
<dbReference type="SUPFAM" id="SSF47973">
    <property type="entry name" value="Ribosomal protein S7"/>
    <property type="match status" value="1"/>
</dbReference>
<dbReference type="PROSITE" id="PS00052">
    <property type="entry name" value="RIBOSOMAL_S7"/>
    <property type="match status" value="1"/>
</dbReference>
<gene>
    <name evidence="1" type="primary">rpsG</name>
    <name type="ordered locus">A1E_00675</name>
</gene>